<proteinExistence type="evidence at protein level"/>
<keyword id="KW-0012">Acyltransferase</keyword>
<keyword id="KW-0028">Amino-acid biosynthesis</keyword>
<keyword id="KW-0198">Cysteine biosynthesis</keyword>
<keyword id="KW-0963">Cytoplasm</keyword>
<keyword id="KW-1185">Reference proteome</keyword>
<keyword id="KW-0808">Transferase</keyword>
<reference key="1">
    <citation type="journal article" date="2002" name="Nature">
        <title>Comparison of the genomes of two Xanthomonas pathogens with differing host specificities.</title>
        <authorList>
            <person name="da Silva A.C.R."/>
            <person name="Ferro J.A."/>
            <person name="Reinach F.C."/>
            <person name="Farah C.S."/>
            <person name="Furlan L.R."/>
            <person name="Quaggio R.B."/>
            <person name="Monteiro-Vitorello C.B."/>
            <person name="Van Sluys M.A."/>
            <person name="Almeida N.F. Jr."/>
            <person name="Alves L.M.C."/>
            <person name="do Amaral A.M."/>
            <person name="Bertolini M.C."/>
            <person name="Camargo L.E.A."/>
            <person name="Camarotte G."/>
            <person name="Cannavan F."/>
            <person name="Cardozo J."/>
            <person name="Chambergo F."/>
            <person name="Ciapina L.P."/>
            <person name="Cicarelli R.M.B."/>
            <person name="Coutinho L.L."/>
            <person name="Cursino-Santos J.R."/>
            <person name="El-Dorry H."/>
            <person name="Faria J.B."/>
            <person name="Ferreira A.J.S."/>
            <person name="Ferreira R.C.C."/>
            <person name="Ferro M.I.T."/>
            <person name="Formighieri E.F."/>
            <person name="Franco M.C."/>
            <person name="Greggio C.C."/>
            <person name="Gruber A."/>
            <person name="Katsuyama A.M."/>
            <person name="Kishi L.T."/>
            <person name="Leite R.P."/>
            <person name="Lemos E.G.M."/>
            <person name="Lemos M.V.F."/>
            <person name="Locali E.C."/>
            <person name="Machado M.A."/>
            <person name="Madeira A.M.B.N."/>
            <person name="Martinez-Rossi N.M."/>
            <person name="Martins E.C."/>
            <person name="Meidanis J."/>
            <person name="Menck C.F.M."/>
            <person name="Miyaki C.Y."/>
            <person name="Moon D.H."/>
            <person name="Moreira L.M."/>
            <person name="Novo M.T.M."/>
            <person name="Okura V.K."/>
            <person name="Oliveira M.C."/>
            <person name="Oliveira V.R."/>
            <person name="Pereira H.A."/>
            <person name="Rossi A."/>
            <person name="Sena J.A.D."/>
            <person name="Silva C."/>
            <person name="de Souza R.F."/>
            <person name="Spinola L.A.F."/>
            <person name="Takita M.A."/>
            <person name="Tamura R.E."/>
            <person name="Teixeira E.C."/>
            <person name="Tezza R.I.D."/>
            <person name="Trindade dos Santos M."/>
            <person name="Truffi D."/>
            <person name="Tsai S.M."/>
            <person name="White F.F."/>
            <person name="Setubal J.C."/>
            <person name="Kitajima J.P."/>
        </authorList>
    </citation>
    <scope>NUCLEOTIDE SEQUENCE [LARGE SCALE GENOMIC DNA]</scope>
    <source>
        <strain>ATCC 33913 / DSM 3586 / NCPPB 528 / LMG 568 / P 25</strain>
    </source>
</reference>
<reference key="2">
    <citation type="journal article" date="2017" name="Nat. Chem. Biol.">
        <title>Parallel evolution of non-homologous isofunctional enzymes in methionine biosynthesis.</title>
        <authorList>
            <person name="Bastard K."/>
            <person name="Perret A."/>
            <person name="Mariage A."/>
            <person name="Bessonnet T."/>
            <person name="Pinet-Turpault A."/>
            <person name="Petit J.L."/>
            <person name="Darii E."/>
            <person name="Bazire P."/>
            <person name="Vergne-Vaxelaire C."/>
            <person name="Brewee C."/>
            <person name="Debard A."/>
            <person name="Pellouin V."/>
            <person name="Besnard-Gonnet M."/>
            <person name="Artiguenave F."/>
            <person name="Medigue C."/>
            <person name="Vallenet D."/>
            <person name="Danchin A."/>
            <person name="Zaparucha A."/>
            <person name="Weissenbach J."/>
            <person name="Salanoubat M."/>
            <person name="de Berardinis V."/>
        </authorList>
    </citation>
    <scope>FUNCTION</scope>
    <scope>CATALYTIC ACTIVITY</scope>
    <scope>PATHWAY</scope>
</reference>
<protein>
    <recommendedName>
        <fullName evidence="1 4">Serine O-succinyltransferase</fullName>
        <shortName evidence="1 3">SST</shortName>
        <ecNumber evidence="1 2">2.3.1.-</ecNumber>
    </recommendedName>
    <alternativeName>
        <fullName evidence="4">Homoserine O-succinyltransferase</fullName>
        <shortName evidence="3">HST</shortName>
        <ecNumber evidence="2">2.3.1.46</ecNumber>
    </alternativeName>
    <alternativeName>
        <fullName evidence="4">Homoserine transsuccinylase</fullName>
        <shortName evidence="4">HTS</shortName>
    </alternativeName>
</protein>
<organism>
    <name type="scientific">Xanthomonas campestris pv. campestris (strain ATCC 33913 / DSM 3586 / NCPPB 528 / LMG 568 / P 25)</name>
    <dbReference type="NCBI Taxonomy" id="190485"/>
    <lineage>
        <taxon>Bacteria</taxon>
        <taxon>Pseudomonadati</taxon>
        <taxon>Pseudomonadota</taxon>
        <taxon>Gammaproteobacteria</taxon>
        <taxon>Lysobacterales</taxon>
        <taxon>Lysobacteraceae</taxon>
        <taxon>Xanthomonas</taxon>
    </lineage>
</organism>
<evidence type="ECO:0000255" key="1">
    <source>
        <dbReference type="HAMAP-Rule" id="MF_00296"/>
    </source>
</evidence>
<evidence type="ECO:0000269" key="2">
    <source>
    </source>
</evidence>
<evidence type="ECO:0000303" key="3">
    <source>
    </source>
</evidence>
<evidence type="ECO:0000305" key="4"/>
<evidence type="ECO:0000305" key="5">
    <source>
    </source>
</evidence>
<gene>
    <name type="ordered locus">XCC2228</name>
</gene>
<sequence>MTEFIPTGTRFHALPSPLPMKRGGVLHQARVAYETWGTLDADHGNAVLIVTGLSPNAHAAANADNPEPGWWEAMVGPGKPIDTDRWFVVCVNSLGSCKGSTGPASIDPATGAPYRLSFPELSIEDVADAAADVVRALGIAQLACLIGNSMGGMTALALLLRHPGIARSHINISGSAQALPFSIAIRSLQREAIRLDPHWNGGHYDDVQYPESGMRMARKLGVITYRSALEWDGRFGRVRLDSELTAEDPFGLEFQVESYLEGHARRFVRFFDPNCYLYLSRSMDWFDLAEYAPDTRADAAAPESGVLAGLAQIRIARALAIGANTDILFPVQQQEQIAEGLRAGGADAQFLGLDSPQGHDAFLVDFARFGPAVRAFLADC</sequence>
<accession>Q8P8L2</accession>
<dbReference type="EC" id="2.3.1.-" evidence="1 2"/>
<dbReference type="EC" id="2.3.1.46" evidence="2"/>
<dbReference type="EMBL" id="AE008922">
    <property type="protein sequence ID" value="AAM41508.1"/>
    <property type="molecule type" value="Genomic_DNA"/>
</dbReference>
<dbReference type="RefSeq" id="NP_637584.1">
    <property type="nucleotide sequence ID" value="NC_003902.1"/>
</dbReference>
<dbReference type="SMR" id="Q8P8L2"/>
<dbReference type="STRING" id="190485.XCC2228"/>
<dbReference type="ESTHER" id="xanca-METX">
    <property type="family name" value="Homoserine_transacetylase"/>
</dbReference>
<dbReference type="EnsemblBacteria" id="AAM41508">
    <property type="protein sequence ID" value="AAM41508"/>
    <property type="gene ID" value="XCC2228"/>
</dbReference>
<dbReference type="KEGG" id="xcc:XCC2228"/>
<dbReference type="PATRIC" id="fig|190485.4.peg.2379"/>
<dbReference type="eggNOG" id="COG2021">
    <property type="taxonomic scope" value="Bacteria"/>
</dbReference>
<dbReference type="HOGENOM" id="CLU_028760_1_2_6"/>
<dbReference type="OrthoDB" id="9800754at2"/>
<dbReference type="UniPathway" id="UPA00136">
    <property type="reaction ID" value="UER00199"/>
</dbReference>
<dbReference type="Proteomes" id="UP000001010">
    <property type="component" value="Chromosome"/>
</dbReference>
<dbReference type="GO" id="GO:0005737">
    <property type="term" value="C:cytoplasm"/>
    <property type="evidence" value="ECO:0007669"/>
    <property type="project" value="UniProtKB-SubCell"/>
</dbReference>
<dbReference type="GO" id="GO:0004414">
    <property type="term" value="F:homoserine O-acetyltransferase activity"/>
    <property type="evidence" value="ECO:0000318"/>
    <property type="project" value="GO_Central"/>
</dbReference>
<dbReference type="GO" id="GO:0008899">
    <property type="term" value="F:homoserine O-succinyltransferase activity"/>
    <property type="evidence" value="ECO:0007669"/>
    <property type="project" value="UniProtKB-EC"/>
</dbReference>
<dbReference type="GO" id="GO:0160210">
    <property type="term" value="F:L-serine O-succinyltransferase activity"/>
    <property type="evidence" value="ECO:0007669"/>
    <property type="project" value="RHEA"/>
</dbReference>
<dbReference type="GO" id="GO:0006535">
    <property type="term" value="P:cysteine biosynthetic process from serine"/>
    <property type="evidence" value="ECO:0007669"/>
    <property type="project" value="UniProtKB-UniRule"/>
</dbReference>
<dbReference type="GO" id="GO:0009086">
    <property type="term" value="P:methionine biosynthetic process"/>
    <property type="evidence" value="ECO:0000318"/>
    <property type="project" value="GO_Central"/>
</dbReference>
<dbReference type="Gene3D" id="1.10.1740.110">
    <property type="match status" value="1"/>
</dbReference>
<dbReference type="Gene3D" id="3.40.50.1820">
    <property type="entry name" value="alpha/beta hydrolase"/>
    <property type="match status" value="1"/>
</dbReference>
<dbReference type="HAMAP" id="MF_00296">
    <property type="entry name" value="MetX_acyltransf"/>
    <property type="match status" value="1"/>
</dbReference>
<dbReference type="InterPro" id="IPR000073">
    <property type="entry name" value="AB_hydrolase_1"/>
</dbReference>
<dbReference type="InterPro" id="IPR029058">
    <property type="entry name" value="AB_hydrolase_fold"/>
</dbReference>
<dbReference type="InterPro" id="IPR008220">
    <property type="entry name" value="HAT_MetX-like"/>
</dbReference>
<dbReference type="NCBIfam" id="TIGR01392">
    <property type="entry name" value="homoserO_Ac_trn"/>
    <property type="match status" value="1"/>
</dbReference>
<dbReference type="NCBIfam" id="NF001209">
    <property type="entry name" value="PRK00175.1"/>
    <property type="match status" value="1"/>
</dbReference>
<dbReference type="PANTHER" id="PTHR32268">
    <property type="entry name" value="HOMOSERINE O-ACETYLTRANSFERASE"/>
    <property type="match status" value="1"/>
</dbReference>
<dbReference type="PANTHER" id="PTHR32268:SF11">
    <property type="entry name" value="HOMOSERINE O-ACETYLTRANSFERASE"/>
    <property type="match status" value="1"/>
</dbReference>
<dbReference type="Pfam" id="PF00561">
    <property type="entry name" value="Abhydrolase_1"/>
    <property type="match status" value="1"/>
</dbReference>
<dbReference type="PIRSF" id="PIRSF000443">
    <property type="entry name" value="Homoser_Ac_trans"/>
    <property type="match status" value="1"/>
</dbReference>
<dbReference type="SUPFAM" id="SSF53474">
    <property type="entry name" value="alpha/beta-Hydrolases"/>
    <property type="match status" value="1"/>
</dbReference>
<feature type="chain" id="PRO_0000155747" description="Serine O-succinyltransferase">
    <location>
        <begin position="1"/>
        <end position="380"/>
    </location>
</feature>
<feature type="domain" description="AB hydrolase-1" evidence="1">
    <location>
        <begin position="45"/>
        <end position="365"/>
    </location>
</feature>
<feature type="region of interest" description="Important for substrate specificity" evidence="1 5">
    <location>
        <begin position="52"/>
        <end position="55"/>
    </location>
</feature>
<feature type="active site" description="Nucleophile" evidence="1">
    <location>
        <position position="149"/>
    </location>
</feature>
<feature type="active site" evidence="1">
    <location>
        <position position="326"/>
    </location>
</feature>
<feature type="active site" evidence="1">
    <location>
        <position position="359"/>
    </location>
</feature>
<feature type="binding site" evidence="1">
    <location>
        <position position="218"/>
    </location>
    <ligand>
        <name>substrate</name>
    </ligand>
</feature>
<feature type="binding site" evidence="1">
    <location>
        <position position="360"/>
    </location>
    <ligand>
        <name>substrate</name>
    </ligand>
</feature>
<feature type="site" description="Important for acyl-CoA specificity" evidence="1 5">
    <location>
        <position position="186"/>
    </location>
</feature>
<comment type="function">
    <text evidence="2">Transfers a succinyl group from succinyl-CoA to L-serine, forming succinyl-L-serine. In vitro, also has homoserine succinyl transferase activity.</text>
</comment>
<comment type="catalytic activity">
    <reaction evidence="1 2">
        <text>succinyl-CoA + L-serine = O-succinyl-L-serine + CoA</text>
        <dbReference type="Rhea" id="RHEA:52820"/>
        <dbReference type="ChEBI" id="CHEBI:33384"/>
        <dbReference type="ChEBI" id="CHEBI:57287"/>
        <dbReference type="ChEBI" id="CHEBI:57292"/>
        <dbReference type="ChEBI" id="CHEBI:136856"/>
    </reaction>
</comment>
<comment type="catalytic activity">
    <reaction evidence="2">
        <text>L-homoserine + succinyl-CoA = O-succinyl-L-homoserine + CoA</text>
        <dbReference type="Rhea" id="RHEA:22008"/>
        <dbReference type="ChEBI" id="CHEBI:57287"/>
        <dbReference type="ChEBI" id="CHEBI:57292"/>
        <dbReference type="ChEBI" id="CHEBI:57476"/>
        <dbReference type="ChEBI" id="CHEBI:57661"/>
        <dbReference type="EC" id="2.3.1.46"/>
    </reaction>
</comment>
<comment type="pathway">
    <text evidence="1 5">Amino-acid biosynthesis; L-cysteine biosynthesis; L-cysteine from L-serine: step 1/2.</text>
</comment>
<comment type="subunit">
    <text evidence="1">Homodimer.</text>
</comment>
<comment type="subcellular location">
    <subcellularLocation>
        <location evidence="1">Cytoplasm</location>
    </subcellularLocation>
</comment>
<comment type="similarity">
    <text evidence="1">Belongs to the AB hydrolase superfamily. MetX family.</text>
</comment>
<name>SST_XANCP</name>